<comment type="function">
    <text evidence="1">Mitochondrial solute carriers shuttle metabolites, nucleotides, and cofactors through the mitochondrial inner membrane.</text>
</comment>
<comment type="subcellular location">
    <subcellularLocation>
        <location evidence="1">Mitochondrion inner membrane</location>
        <topology evidence="1">Multi-pass membrane protein</topology>
    </subcellularLocation>
</comment>
<comment type="similarity">
    <text evidence="3">Belongs to the mitochondrial carrier (TC 2.A.29) family.</text>
</comment>
<name>MCFL_DICDI</name>
<feature type="chain" id="PRO_0000385525" description="Mitochondrial substrate carrier family protein L">
    <location>
        <begin position="1"/>
        <end position="285"/>
    </location>
</feature>
<feature type="topological domain" description="Mitochondrial intermembrane" evidence="1">
    <location>
        <begin position="1"/>
        <end position="13"/>
    </location>
</feature>
<feature type="transmembrane region" description="Helical; Name=1" evidence="2">
    <location>
        <begin position="14"/>
        <end position="34"/>
    </location>
</feature>
<feature type="topological domain" description="Mitochondrial matrix" evidence="1">
    <location>
        <begin position="35"/>
        <end position="69"/>
    </location>
</feature>
<feature type="transmembrane region" description="Helical; Name=2" evidence="2">
    <location>
        <begin position="70"/>
        <end position="90"/>
    </location>
</feature>
<feature type="topological domain" description="Mitochondrial intermembrane" evidence="1">
    <location>
        <begin position="91"/>
        <end position="102"/>
    </location>
</feature>
<feature type="transmembrane region" description="Helical; Name=3" evidence="2">
    <location>
        <begin position="103"/>
        <end position="123"/>
    </location>
</feature>
<feature type="topological domain" description="Mitochondrial matrix" evidence="1">
    <location>
        <begin position="124"/>
        <end position="156"/>
    </location>
</feature>
<feature type="transmembrane region" description="Helical; Name=4" evidence="2">
    <location>
        <begin position="157"/>
        <end position="177"/>
    </location>
</feature>
<feature type="topological domain" description="Mitochondrial intermembrane" evidence="1">
    <location>
        <begin position="178"/>
        <end position="198"/>
    </location>
</feature>
<feature type="transmembrane region" description="Helical; Name=5" evidence="2">
    <location>
        <begin position="199"/>
        <end position="219"/>
    </location>
</feature>
<feature type="topological domain" description="Mitochondrial matrix" evidence="1">
    <location>
        <begin position="220"/>
        <end position="256"/>
    </location>
</feature>
<feature type="transmembrane region" description="Helical; Name=6" evidence="2">
    <location>
        <begin position="257"/>
        <end position="277"/>
    </location>
</feature>
<feature type="topological domain" description="Mitochondrial intermembrane" evidence="1">
    <location>
        <begin position="278"/>
        <end position="285"/>
    </location>
</feature>
<feature type="repeat" description="Solcar 1">
    <location>
        <begin position="8"/>
        <end position="94"/>
    </location>
</feature>
<feature type="repeat" description="Solcar 2">
    <location>
        <begin position="103"/>
        <end position="185"/>
    </location>
</feature>
<feature type="repeat" description="Solcar 3">
    <location>
        <begin position="193"/>
        <end position="282"/>
    </location>
</feature>
<accession>Q54W11</accession>
<reference key="1">
    <citation type="journal article" date="2005" name="Nature">
        <title>The genome of the social amoeba Dictyostelium discoideum.</title>
        <authorList>
            <person name="Eichinger L."/>
            <person name="Pachebat J.A."/>
            <person name="Gloeckner G."/>
            <person name="Rajandream M.A."/>
            <person name="Sucgang R."/>
            <person name="Berriman M."/>
            <person name="Song J."/>
            <person name="Olsen R."/>
            <person name="Szafranski K."/>
            <person name="Xu Q."/>
            <person name="Tunggal B."/>
            <person name="Kummerfeld S."/>
            <person name="Madera M."/>
            <person name="Konfortov B.A."/>
            <person name="Rivero F."/>
            <person name="Bankier A.T."/>
            <person name="Lehmann R."/>
            <person name="Hamlin N."/>
            <person name="Davies R."/>
            <person name="Gaudet P."/>
            <person name="Fey P."/>
            <person name="Pilcher K."/>
            <person name="Chen G."/>
            <person name="Saunders D."/>
            <person name="Sodergren E.J."/>
            <person name="Davis P."/>
            <person name="Kerhornou A."/>
            <person name="Nie X."/>
            <person name="Hall N."/>
            <person name="Anjard C."/>
            <person name="Hemphill L."/>
            <person name="Bason N."/>
            <person name="Farbrother P."/>
            <person name="Desany B."/>
            <person name="Just E."/>
            <person name="Morio T."/>
            <person name="Rost R."/>
            <person name="Churcher C.M."/>
            <person name="Cooper J."/>
            <person name="Haydock S."/>
            <person name="van Driessche N."/>
            <person name="Cronin A."/>
            <person name="Goodhead I."/>
            <person name="Muzny D.M."/>
            <person name="Mourier T."/>
            <person name="Pain A."/>
            <person name="Lu M."/>
            <person name="Harper D."/>
            <person name="Lindsay R."/>
            <person name="Hauser H."/>
            <person name="James K.D."/>
            <person name="Quiles M."/>
            <person name="Madan Babu M."/>
            <person name="Saito T."/>
            <person name="Buchrieser C."/>
            <person name="Wardroper A."/>
            <person name="Felder M."/>
            <person name="Thangavelu M."/>
            <person name="Johnson D."/>
            <person name="Knights A."/>
            <person name="Loulseged H."/>
            <person name="Mungall K.L."/>
            <person name="Oliver K."/>
            <person name="Price C."/>
            <person name="Quail M.A."/>
            <person name="Urushihara H."/>
            <person name="Hernandez J."/>
            <person name="Rabbinowitsch E."/>
            <person name="Steffen D."/>
            <person name="Sanders M."/>
            <person name="Ma J."/>
            <person name="Kohara Y."/>
            <person name="Sharp S."/>
            <person name="Simmonds M.N."/>
            <person name="Spiegler S."/>
            <person name="Tivey A."/>
            <person name="Sugano S."/>
            <person name="White B."/>
            <person name="Walker D."/>
            <person name="Woodward J.R."/>
            <person name="Winckler T."/>
            <person name="Tanaka Y."/>
            <person name="Shaulsky G."/>
            <person name="Schleicher M."/>
            <person name="Weinstock G.M."/>
            <person name="Rosenthal A."/>
            <person name="Cox E.C."/>
            <person name="Chisholm R.L."/>
            <person name="Gibbs R.A."/>
            <person name="Loomis W.F."/>
            <person name="Platzer M."/>
            <person name="Kay R.R."/>
            <person name="Williams J.G."/>
            <person name="Dear P.H."/>
            <person name="Noegel A.A."/>
            <person name="Barrell B.G."/>
            <person name="Kuspa A."/>
        </authorList>
    </citation>
    <scope>NUCLEOTIDE SEQUENCE [LARGE SCALE GENOMIC DNA]</scope>
    <source>
        <strain>AX4</strain>
    </source>
</reference>
<reference key="2">
    <citation type="journal article" date="2007" name="Biochimie">
        <title>Mitochondrial carrier family: repertoire and peculiarities of the cellular slime mould Dictyostelium discoideum.</title>
        <authorList>
            <person name="Satre M."/>
            <person name="Mattei S."/>
            <person name="Aubry L."/>
            <person name="Gaudet P."/>
            <person name="Pelosi L."/>
            <person name="Brandolin G."/>
            <person name="Klein G."/>
        </authorList>
    </citation>
    <scope>REVIEW</scope>
</reference>
<dbReference type="EMBL" id="AAFI02000035">
    <property type="protein sequence ID" value="EAL67482.1"/>
    <property type="molecule type" value="Genomic_DNA"/>
</dbReference>
<dbReference type="RefSeq" id="XP_641439.1">
    <property type="nucleotide sequence ID" value="XM_636347.1"/>
</dbReference>
<dbReference type="SMR" id="Q54W11"/>
<dbReference type="GlyGen" id="Q54W11">
    <property type="glycosylation" value="1 site"/>
</dbReference>
<dbReference type="PaxDb" id="44689-DDB0237605"/>
<dbReference type="EnsemblProtists" id="EAL67482">
    <property type="protein sequence ID" value="EAL67482"/>
    <property type="gene ID" value="DDB_G0280021"/>
</dbReference>
<dbReference type="GeneID" id="8622324"/>
<dbReference type="KEGG" id="ddi:DDB_G0280021"/>
<dbReference type="dictyBase" id="DDB_G0280021">
    <property type="gene designation" value="mcfL"/>
</dbReference>
<dbReference type="VEuPathDB" id="AmoebaDB:DDB_G0280021"/>
<dbReference type="eggNOG" id="KOG0762">
    <property type="taxonomic scope" value="Eukaryota"/>
</dbReference>
<dbReference type="HOGENOM" id="CLU_015166_16_2_1"/>
<dbReference type="InParanoid" id="Q54W11"/>
<dbReference type="OMA" id="INSCMFG"/>
<dbReference type="PhylomeDB" id="Q54W11"/>
<dbReference type="PRO" id="PR:Q54W11"/>
<dbReference type="Proteomes" id="UP000002195">
    <property type="component" value="Chromosome 3"/>
</dbReference>
<dbReference type="GO" id="GO:0005743">
    <property type="term" value="C:mitochondrial inner membrane"/>
    <property type="evidence" value="ECO:0007669"/>
    <property type="project" value="UniProtKB-SubCell"/>
</dbReference>
<dbReference type="GO" id="GO:0000064">
    <property type="term" value="F:L-ornithine transmembrane transporter activity"/>
    <property type="evidence" value="ECO:0000318"/>
    <property type="project" value="GO_Central"/>
</dbReference>
<dbReference type="GO" id="GO:1990575">
    <property type="term" value="P:mitochondrial L-ornithine transmembrane transport"/>
    <property type="evidence" value="ECO:0000318"/>
    <property type="project" value="GO_Central"/>
</dbReference>
<dbReference type="Gene3D" id="1.50.40.10">
    <property type="entry name" value="Mitochondrial carrier domain"/>
    <property type="match status" value="1"/>
</dbReference>
<dbReference type="InterPro" id="IPR002067">
    <property type="entry name" value="Mit_carrier"/>
</dbReference>
<dbReference type="InterPro" id="IPR050567">
    <property type="entry name" value="Mitochondrial_Carrier"/>
</dbReference>
<dbReference type="InterPro" id="IPR018108">
    <property type="entry name" value="Mitochondrial_sb/sol_carrier"/>
</dbReference>
<dbReference type="InterPro" id="IPR023395">
    <property type="entry name" value="Mt_carrier_dom_sf"/>
</dbReference>
<dbReference type="PANTHER" id="PTHR45624">
    <property type="entry name" value="MITOCHONDRIAL BASIC AMINO ACIDS TRANSPORTER-RELATED"/>
    <property type="match status" value="1"/>
</dbReference>
<dbReference type="PANTHER" id="PTHR45624:SF57">
    <property type="entry name" value="MITOCHONDRIAL SUBSTRATE CARRIER FAMILY PROTEIN L"/>
    <property type="match status" value="1"/>
</dbReference>
<dbReference type="Pfam" id="PF00153">
    <property type="entry name" value="Mito_carr"/>
    <property type="match status" value="3"/>
</dbReference>
<dbReference type="PRINTS" id="PR00926">
    <property type="entry name" value="MITOCARRIER"/>
</dbReference>
<dbReference type="SUPFAM" id="SSF103506">
    <property type="entry name" value="Mitochondrial carrier"/>
    <property type="match status" value="1"/>
</dbReference>
<dbReference type="PROSITE" id="PS50920">
    <property type="entry name" value="SOLCAR"/>
    <property type="match status" value="3"/>
</dbReference>
<organism>
    <name type="scientific">Dictyostelium discoideum</name>
    <name type="common">Social amoeba</name>
    <dbReference type="NCBI Taxonomy" id="44689"/>
    <lineage>
        <taxon>Eukaryota</taxon>
        <taxon>Amoebozoa</taxon>
        <taxon>Evosea</taxon>
        <taxon>Eumycetozoa</taxon>
        <taxon>Dictyostelia</taxon>
        <taxon>Dictyosteliales</taxon>
        <taxon>Dictyosteliaceae</taxon>
        <taxon>Dictyostelium</taxon>
    </lineage>
</organism>
<keyword id="KW-0472">Membrane</keyword>
<keyword id="KW-0496">Mitochondrion</keyword>
<keyword id="KW-0999">Mitochondrion inner membrane</keyword>
<keyword id="KW-1185">Reference proteome</keyword>
<keyword id="KW-0677">Repeat</keyword>
<keyword id="KW-0812">Transmembrane</keyword>
<keyword id="KW-1133">Transmembrane helix</keyword>
<keyword id="KW-0813">Transport</keyword>
<gene>
    <name type="primary">mcfL</name>
    <name type="ORF">DDB_G0280021</name>
</gene>
<sequence>MIASKETKEKIRNFIGGFASGAASTLAGHPFDTLKVRLQTEGSTGRFRGLAHCFTTTIKEEGFFALYKGVTPPLLGMSIINSCMFGAMNIVKSKIHTDKSTPISLGEIMVSGAITGWIVSFVACPIETVKSKLQVQYTGVKLYNGPIDCIKKIGIRGLYKALIPTGFQRNSLYAYFGCYELAQRYLRREDGSMTMGRSFIAGGIAGTGFWLTNFPFDVIRSRIMTMPYNESPPRYKGMIDCAKHIYRVDGLKGFWKGFSPCLLRTFPANGATFVAYECVMKFFPM</sequence>
<protein>
    <recommendedName>
        <fullName>Mitochondrial substrate carrier family protein L</fullName>
    </recommendedName>
</protein>
<evidence type="ECO:0000250" key="1"/>
<evidence type="ECO:0000255" key="2"/>
<evidence type="ECO:0000305" key="3"/>
<proteinExistence type="inferred from homology"/>